<sequence length="883" mass="99003">MNEQYSALRSNVSMLGKVLGETIKDALGEHILDRVETIRKLSKSSRAGNEANRQELLTTLQNLSNDELLPVARAFSQFLNLANTAEQYHSISPKGEAASNPEVIARTLRKLKNQPDLNDATIKKAVESLSLELVLTAHPTEITRRTLIHKMGEINNCLKQLDNTDIADYERHQVMRRLRQLIAQSWHTDEIRKQRPSPVDEAKWGFAVVENSLWQGVPNYLRELNEQLEENLGYKLPVDFVPVRFTSWMGGDRDGNPNVTADITRHVLLLSRWKATDLFLKDIHVLVSELSMVDATPELLALVGEEGASEPYRYLMKKLRARLMATQSWLEARLKGEKLPKPAGLLTQNEQLWEPLYACYQSLQACGMGIIANGELLDTLRRVKCFGVPLVRIDIRQESTRHTEALGEITRYLGIGDYESWSEADKQAFLIRELNSKRPLLPRNWEPSNDTREVLETCKVIAEAPKGSIAAYVISMAKTPSDVLAVHLLLKEAGIGFAMPVAPLFETLDDLNNADDVMTQLLNIDWYRGLIQGKQMVMIGYSDSAKDAGVMAASWAQYQAQDALIKTCEKAGIELTLFHGRGGSIGRGGAPAHAALLSQPPGSLKGGLRVTEQGEMIRFKYGLPEVTVSSLSLYTSAILEANLLPPPEPKDSWRHIMDELSVISCETYRGYVRENKDFVPYFRSATPEQELGKLPLGSRPAKRRPTGGVESLRAIPWIFAWTQNRLMLPAWLGAGTALQKVVEDGKQSELEAMCRDWPFFSTRLGMLEMVFSKADLWLADYYDQRLVAKTLWPLGKELRDLLEEDIKVVLAIANDSHLMADLPWIAESIQLRNVYTDPLNVLQAELLYRSRLTEEQGKSPDPRVEQALMVTIAGVAAGMRNTG</sequence>
<feature type="chain" id="PRO_1000129838" description="Phosphoenolpyruvate carboxylase">
    <location>
        <begin position="1"/>
        <end position="883"/>
    </location>
</feature>
<feature type="active site" evidence="1">
    <location>
        <position position="138"/>
    </location>
</feature>
<feature type="active site" evidence="1">
    <location>
        <position position="546"/>
    </location>
</feature>
<reference key="1">
    <citation type="journal article" date="2011" name="J. Bacteriol.">
        <title>Comparative genomics of 28 Salmonella enterica isolates: evidence for CRISPR-mediated adaptive sublineage evolution.</title>
        <authorList>
            <person name="Fricke W.F."/>
            <person name="Mammel M.K."/>
            <person name="McDermott P.F."/>
            <person name="Tartera C."/>
            <person name="White D.G."/>
            <person name="Leclerc J.E."/>
            <person name="Ravel J."/>
            <person name="Cebula T.A."/>
        </authorList>
    </citation>
    <scope>NUCLEOTIDE SEQUENCE [LARGE SCALE GENOMIC DNA]</scope>
    <source>
        <strain>CT_02021853</strain>
    </source>
</reference>
<proteinExistence type="inferred from homology"/>
<keyword id="KW-0120">Carbon dioxide fixation</keyword>
<keyword id="KW-0456">Lyase</keyword>
<keyword id="KW-0460">Magnesium</keyword>
<name>CAPP_SALDC</name>
<evidence type="ECO:0000255" key="1">
    <source>
        <dbReference type="HAMAP-Rule" id="MF_00595"/>
    </source>
</evidence>
<dbReference type="EC" id="4.1.1.31" evidence="1"/>
<dbReference type="EMBL" id="CP001144">
    <property type="protein sequence ID" value="ACH77827.1"/>
    <property type="molecule type" value="Genomic_DNA"/>
</dbReference>
<dbReference type="RefSeq" id="WP_001005548.1">
    <property type="nucleotide sequence ID" value="NC_011205.1"/>
</dbReference>
<dbReference type="SMR" id="B5FPX1"/>
<dbReference type="KEGG" id="sed:SeD_A4524"/>
<dbReference type="HOGENOM" id="CLU_006557_2_0_6"/>
<dbReference type="Proteomes" id="UP000008322">
    <property type="component" value="Chromosome"/>
</dbReference>
<dbReference type="GO" id="GO:0005829">
    <property type="term" value="C:cytosol"/>
    <property type="evidence" value="ECO:0007669"/>
    <property type="project" value="TreeGrafter"/>
</dbReference>
<dbReference type="GO" id="GO:0000287">
    <property type="term" value="F:magnesium ion binding"/>
    <property type="evidence" value="ECO:0007669"/>
    <property type="project" value="UniProtKB-UniRule"/>
</dbReference>
<dbReference type="GO" id="GO:0008964">
    <property type="term" value="F:phosphoenolpyruvate carboxylase activity"/>
    <property type="evidence" value="ECO:0007669"/>
    <property type="project" value="UniProtKB-UniRule"/>
</dbReference>
<dbReference type="GO" id="GO:0015977">
    <property type="term" value="P:carbon fixation"/>
    <property type="evidence" value="ECO:0007669"/>
    <property type="project" value="UniProtKB-UniRule"/>
</dbReference>
<dbReference type="GO" id="GO:0006107">
    <property type="term" value="P:oxaloacetate metabolic process"/>
    <property type="evidence" value="ECO:0007669"/>
    <property type="project" value="UniProtKB-UniRule"/>
</dbReference>
<dbReference type="GO" id="GO:0006099">
    <property type="term" value="P:tricarboxylic acid cycle"/>
    <property type="evidence" value="ECO:0007669"/>
    <property type="project" value="InterPro"/>
</dbReference>
<dbReference type="FunFam" id="1.20.1440.90:FF:000002">
    <property type="entry name" value="Phosphoenolpyruvate carboxylase"/>
    <property type="match status" value="1"/>
</dbReference>
<dbReference type="Gene3D" id="1.20.1440.90">
    <property type="entry name" value="Phosphoenolpyruvate/pyruvate domain"/>
    <property type="match status" value="1"/>
</dbReference>
<dbReference type="HAMAP" id="MF_00595">
    <property type="entry name" value="PEPcase_type1"/>
    <property type="match status" value="1"/>
</dbReference>
<dbReference type="InterPro" id="IPR021135">
    <property type="entry name" value="PEP_COase"/>
</dbReference>
<dbReference type="InterPro" id="IPR022805">
    <property type="entry name" value="PEP_COase_bac/pln-type"/>
</dbReference>
<dbReference type="InterPro" id="IPR018129">
    <property type="entry name" value="PEP_COase_Lys_AS"/>
</dbReference>
<dbReference type="InterPro" id="IPR033129">
    <property type="entry name" value="PEPCASE_His_AS"/>
</dbReference>
<dbReference type="InterPro" id="IPR015813">
    <property type="entry name" value="Pyrv/PenolPyrv_kinase-like_dom"/>
</dbReference>
<dbReference type="NCBIfam" id="NF000584">
    <property type="entry name" value="PRK00009.1"/>
    <property type="match status" value="1"/>
</dbReference>
<dbReference type="PANTHER" id="PTHR30523">
    <property type="entry name" value="PHOSPHOENOLPYRUVATE CARBOXYLASE"/>
    <property type="match status" value="1"/>
</dbReference>
<dbReference type="PANTHER" id="PTHR30523:SF6">
    <property type="entry name" value="PHOSPHOENOLPYRUVATE CARBOXYLASE"/>
    <property type="match status" value="1"/>
</dbReference>
<dbReference type="Pfam" id="PF00311">
    <property type="entry name" value="PEPcase"/>
    <property type="match status" value="1"/>
</dbReference>
<dbReference type="PRINTS" id="PR00150">
    <property type="entry name" value="PEPCARBXLASE"/>
</dbReference>
<dbReference type="SUPFAM" id="SSF51621">
    <property type="entry name" value="Phosphoenolpyruvate/pyruvate domain"/>
    <property type="match status" value="1"/>
</dbReference>
<dbReference type="PROSITE" id="PS00781">
    <property type="entry name" value="PEPCASE_1"/>
    <property type="match status" value="1"/>
</dbReference>
<dbReference type="PROSITE" id="PS00393">
    <property type="entry name" value="PEPCASE_2"/>
    <property type="match status" value="1"/>
</dbReference>
<gene>
    <name evidence="1" type="primary">ppc</name>
    <name type="ordered locus">SeD_A4524</name>
</gene>
<organism>
    <name type="scientific">Salmonella dublin (strain CT_02021853)</name>
    <dbReference type="NCBI Taxonomy" id="439851"/>
    <lineage>
        <taxon>Bacteria</taxon>
        <taxon>Pseudomonadati</taxon>
        <taxon>Pseudomonadota</taxon>
        <taxon>Gammaproteobacteria</taxon>
        <taxon>Enterobacterales</taxon>
        <taxon>Enterobacteriaceae</taxon>
        <taxon>Salmonella</taxon>
    </lineage>
</organism>
<comment type="function">
    <text evidence="1">Forms oxaloacetate, a four-carbon dicarboxylic acid source for the tricarboxylic acid cycle.</text>
</comment>
<comment type="catalytic activity">
    <reaction evidence="1">
        <text>oxaloacetate + phosphate = phosphoenolpyruvate + hydrogencarbonate</text>
        <dbReference type="Rhea" id="RHEA:28370"/>
        <dbReference type="ChEBI" id="CHEBI:16452"/>
        <dbReference type="ChEBI" id="CHEBI:17544"/>
        <dbReference type="ChEBI" id="CHEBI:43474"/>
        <dbReference type="ChEBI" id="CHEBI:58702"/>
        <dbReference type="EC" id="4.1.1.31"/>
    </reaction>
</comment>
<comment type="cofactor">
    <cofactor evidence="1">
        <name>Mg(2+)</name>
        <dbReference type="ChEBI" id="CHEBI:18420"/>
    </cofactor>
</comment>
<comment type="similarity">
    <text evidence="1">Belongs to the PEPCase type 1 family.</text>
</comment>
<accession>B5FPX1</accession>
<protein>
    <recommendedName>
        <fullName evidence="1">Phosphoenolpyruvate carboxylase</fullName>
        <shortName evidence="1">PEPC</shortName>
        <shortName evidence="1">PEPCase</shortName>
        <ecNumber evidence="1">4.1.1.31</ecNumber>
    </recommendedName>
</protein>